<comment type="subcellular location">
    <subcellularLocation>
        <location evidence="4">Cell inner membrane</location>
        <topology evidence="1">Single-pass membrane protein</topology>
    </subcellularLocation>
</comment>
<comment type="induction">
    <text evidence="2">Expressed approximately equally in exponential and stationary phases (at protein level).</text>
</comment>
<organism>
    <name type="scientific">Escherichia coli (strain K12)</name>
    <dbReference type="NCBI Taxonomy" id="83333"/>
    <lineage>
        <taxon>Bacteria</taxon>
        <taxon>Pseudomonadati</taxon>
        <taxon>Pseudomonadota</taxon>
        <taxon>Gammaproteobacteria</taxon>
        <taxon>Enterobacterales</taxon>
        <taxon>Enterobacteriaceae</taxon>
        <taxon>Escherichia</taxon>
    </lineage>
</organism>
<keyword id="KW-0997">Cell inner membrane</keyword>
<keyword id="KW-1003">Cell membrane</keyword>
<keyword id="KW-0472">Membrane</keyword>
<keyword id="KW-1185">Reference proteome</keyword>
<keyword id="KW-0812">Transmembrane</keyword>
<keyword id="KW-1133">Transmembrane helix</keyword>
<name>YNCO_ECOLI</name>
<protein>
    <recommendedName>
        <fullName evidence="3">Protein YncO</fullName>
    </recommendedName>
</protein>
<reference key="1">
    <citation type="journal article" date="1997" name="Science">
        <title>The complete genome sequence of Escherichia coli K-12.</title>
        <authorList>
            <person name="Blattner F.R."/>
            <person name="Plunkett G. III"/>
            <person name="Bloch C.A."/>
            <person name="Perna N.T."/>
            <person name="Burland V."/>
            <person name="Riley M."/>
            <person name="Collado-Vides J."/>
            <person name="Glasner J.D."/>
            <person name="Rode C.K."/>
            <person name="Mayhew G.F."/>
            <person name="Gregor J."/>
            <person name="Davis N.W."/>
            <person name="Kirkpatrick H.A."/>
            <person name="Goeden M.A."/>
            <person name="Rose D.J."/>
            <person name="Mau B."/>
            <person name="Shao Y."/>
        </authorList>
    </citation>
    <scope>NUCLEOTIDE SEQUENCE [LARGE SCALE GENOMIC DNA]</scope>
    <source>
        <strain>K12 / MG1655 / ATCC 47076</strain>
    </source>
</reference>
<reference key="2">
    <citation type="journal article" date="2018" name="Proteomics">
        <title>Identifying new small proteins in Escherichia coli.</title>
        <authorList>
            <person name="VanOrsdel C.E."/>
            <person name="Kelly J.P."/>
            <person name="Burke B.N."/>
            <person name="Lein C.D."/>
            <person name="Oufiero C.E."/>
            <person name="Sanchez J.F."/>
            <person name="Wimmers L.E."/>
            <person name="Hearn D.J."/>
            <person name="Abuikhdair F.J."/>
            <person name="Barnhart K.R."/>
            <person name="Duley M.L."/>
            <person name="Ernst S.E.G."/>
            <person name="Kenerson B.A."/>
            <person name="Serafin A.J."/>
            <person name="Hemm M.R."/>
        </authorList>
    </citation>
    <scope>IDENTIFICATION</scope>
    <scope>INDUCTION</scope>
</reference>
<evidence type="ECO:0000255" key="1"/>
<evidence type="ECO:0000269" key="2">
    <source>
    </source>
</evidence>
<evidence type="ECO:0000303" key="3">
    <source>
    </source>
</evidence>
<evidence type="ECO:0000305" key="4"/>
<accession>P0DPO5</accession>
<accession>A0A385XJG2</accession>
<gene>
    <name evidence="3" type="primary">yncO</name>
    <name type="ordered locus">b4745</name>
</gene>
<feature type="chain" id="PRO_0000445173" description="Protein YncO">
    <location>
        <begin position="1"/>
        <end position="61"/>
    </location>
</feature>
<feature type="transmembrane region" description="Helical" evidence="1">
    <location>
        <begin position="18"/>
        <end position="38"/>
    </location>
</feature>
<proteinExistence type="evidence at protein level"/>
<sequence>MIYITIFMILPCPVPCSHVFLYVFYIFLFLVLFIMTIYQSSQKLHFSNCYHNNQHHNSLHN</sequence>
<dbReference type="EMBL" id="U00096">
    <property type="protein sequence ID" value="AYC08208.1"/>
    <property type="molecule type" value="Genomic_DNA"/>
</dbReference>
<dbReference type="SMR" id="P0DPO5"/>
<dbReference type="EnsemblBacteria" id="AYC08208">
    <property type="protein sequence ID" value="AYC08208"/>
    <property type="gene ID" value="b4745"/>
</dbReference>
<dbReference type="InParanoid" id="P0DPO5"/>
<dbReference type="BioCyc" id="EcoCyc:MONOMER0-4422"/>
<dbReference type="PRO" id="PR:P0DPO5"/>
<dbReference type="Proteomes" id="UP000000625">
    <property type="component" value="Chromosome"/>
</dbReference>
<dbReference type="GO" id="GO:0005886">
    <property type="term" value="C:plasma membrane"/>
    <property type="evidence" value="ECO:0007669"/>
    <property type="project" value="UniProtKB-SubCell"/>
</dbReference>
<dbReference type="Pfam" id="PF23695">
    <property type="entry name" value="YncO"/>
    <property type="match status" value="1"/>
</dbReference>